<comment type="function">
    <text evidence="1">Catalyzes the ATP-dependent amidation of the two carboxylate groups at positions a and c of cobyrinate, using either L-glutamine or ammonia as the nitrogen source.</text>
</comment>
<comment type="catalytic activity">
    <reaction evidence="1">
        <text>cob(II)yrinate + 2 L-glutamine + 2 ATP + 2 H2O = cob(II)yrinate a,c diamide + 2 L-glutamate + 2 ADP + 2 phosphate + 2 H(+)</text>
        <dbReference type="Rhea" id="RHEA:26289"/>
        <dbReference type="ChEBI" id="CHEBI:15377"/>
        <dbReference type="ChEBI" id="CHEBI:15378"/>
        <dbReference type="ChEBI" id="CHEBI:29985"/>
        <dbReference type="ChEBI" id="CHEBI:30616"/>
        <dbReference type="ChEBI" id="CHEBI:43474"/>
        <dbReference type="ChEBI" id="CHEBI:58359"/>
        <dbReference type="ChEBI" id="CHEBI:58537"/>
        <dbReference type="ChEBI" id="CHEBI:58894"/>
        <dbReference type="ChEBI" id="CHEBI:456216"/>
        <dbReference type="EC" id="6.3.5.11"/>
    </reaction>
</comment>
<comment type="cofactor">
    <cofactor evidence="1">
        <name>Mg(2+)</name>
        <dbReference type="ChEBI" id="CHEBI:18420"/>
    </cofactor>
</comment>
<comment type="pathway">
    <text evidence="1">Cofactor biosynthesis; adenosylcobalamin biosynthesis; cob(II)yrinate a,c-diamide from sirohydrochlorin (anaerobic route): step 10/10.</text>
</comment>
<comment type="domain">
    <text evidence="1">Comprises of two domains. The C-terminal domain contains the binding site for glutamine and catalyzes the hydrolysis of this substrate to glutamate and ammonia. The N-terminal domain is anticipated to bind ATP and cobyrinate and catalyzes the ultimate synthesis of the diamide product. The ammonia produced via the glutaminase domain is probably translocated to the adjacent domain via a molecular tunnel, where it reacts with an activated intermediate.</text>
</comment>
<comment type="miscellaneous">
    <text evidence="1">The a and c carboxylates of cobyrinate are activated for nucleophilic attack via formation of a phosphorylated intermediate by ATP. CbiA catalyzes first the amidation of the c-carboxylate, and then that of the a-carboxylate.</text>
</comment>
<comment type="similarity">
    <text evidence="1">Belongs to the CobB/CbiA family.</text>
</comment>
<evidence type="ECO:0000255" key="1">
    <source>
        <dbReference type="HAMAP-Rule" id="MF_00027"/>
    </source>
</evidence>
<gene>
    <name evidence="1" type="primary">cbiA</name>
    <name type="ordered locus">sll1501</name>
</gene>
<organism>
    <name type="scientific">Synechocystis sp. (strain ATCC 27184 / PCC 6803 / Kazusa)</name>
    <dbReference type="NCBI Taxonomy" id="1111708"/>
    <lineage>
        <taxon>Bacteria</taxon>
        <taxon>Bacillati</taxon>
        <taxon>Cyanobacteriota</taxon>
        <taxon>Cyanophyceae</taxon>
        <taxon>Synechococcales</taxon>
        <taxon>Merismopediaceae</taxon>
        <taxon>Synechocystis</taxon>
    </lineage>
</organism>
<reference key="1">
    <citation type="journal article" date="1996" name="DNA Res.">
        <title>Sequence analysis of the genome of the unicellular cyanobacterium Synechocystis sp. strain PCC6803. II. Sequence determination of the entire genome and assignment of potential protein-coding regions.</title>
        <authorList>
            <person name="Kaneko T."/>
            <person name="Sato S."/>
            <person name="Kotani H."/>
            <person name="Tanaka A."/>
            <person name="Asamizu E."/>
            <person name="Nakamura Y."/>
            <person name="Miyajima N."/>
            <person name="Hirosawa M."/>
            <person name="Sugiura M."/>
            <person name="Sasamoto S."/>
            <person name="Kimura T."/>
            <person name="Hosouchi T."/>
            <person name="Matsuno A."/>
            <person name="Muraki A."/>
            <person name="Nakazaki N."/>
            <person name="Naruo K."/>
            <person name="Okumura S."/>
            <person name="Shimpo S."/>
            <person name="Takeuchi C."/>
            <person name="Wada T."/>
            <person name="Watanabe A."/>
            <person name="Yamada M."/>
            <person name="Yasuda M."/>
            <person name="Tabata S."/>
        </authorList>
    </citation>
    <scope>NUCLEOTIDE SEQUENCE [LARGE SCALE GENOMIC DNA]</scope>
    <source>
        <strain>ATCC 27184 / PCC 6803 / Kazusa</strain>
    </source>
</reference>
<accession>P73002</accession>
<feature type="chain" id="PRO_0000141271" description="Cobyrinate a,c-diamide synthase">
    <location>
        <begin position="1"/>
        <end position="482"/>
    </location>
</feature>
<feature type="domain" description="GATase cobBQ-type" evidence="1">
    <location>
        <begin position="248"/>
        <end position="441"/>
    </location>
</feature>
<feature type="active site" description="Nucleophile" evidence="1">
    <location>
        <position position="331"/>
    </location>
</feature>
<feature type="site" description="Increases nucleophilicity of active site Cys" evidence="1">
    <location>
        <position position="433"/>
    </location>
</feature>
<keyword id="KW-0067">ATP-binding</keyword>
<keyword id="KW-0169">Cobalamin biosynthesis</keyword>
<keyword id="KW-0315">Glutamine amidotransferase</keyword>
<keyword id="KW-0436">Ligase</keyword>
<keyword id="KW-0460">Magnesium</keyword>
<keyword id="KW-0547">Nucleotide-binding</keyword>
<keyword id="KW-1185">Reference proteome</keyword>
<dbReference type="EC" id="6.3.5.11" evidence="1"/>
<dbReference type="EMBL" id="BA000022">
    <property type="protein sequence ID" value="BAA17022.1"/>
    <property type="molecule type" value="Genomic_DNA"/>
</dbReference>
<dbReference type="PIR" id="S74982">
    <property type="entry name" value="S74982"/>
</dbReference>
<dbReference type="SMR" id="P73002"/>
<dbReference type="STRING" id="1148.gene:10497883"/>
<dbReference type="PaxDb" id="1148-1652097"/>
<dbReference type="EnsemblBacteria" id="BAA17022">
    <property type="protein sequence ID" value="BAA17022"/>
    <property type="gene ID" value="BAA17022"/>
</dbReference>
<dbReference type="KEGG" id="syn:sll1501"/>
<dbReference type="eggNOG" id="COG1797">
    <property type="taxonomic scope" value="Bacteria"/>
</dbReference>
<dbReference type="InParanoid" id="P73002"/>
<dbReference type="PhylomeDB" id="P73002"/>
<dbReference type="UniPathway" id="UPA00148">
    <property type="reaction ID" value="UER00231"/>
</dbReference>
<dbReference type="Proteomes" id="UP000001425">
    <property type="component" value="Chromosome"/>
</dbReference>
<dbReference type="GO" id="GO:0005524">
    <property type="term" value="F:ATP binding"/>
    <property type="evidence" value="ECO:0007669"/>
    <property type="project" value="UniProtKB-UniRule"/>
</dbReference>
<dbReference type="GO" id="GO:0042242">
    <property type="term" value="F:cobyrinic acid a,c-diamide synthase activity"/>
    <property type="evidence" value="ECO:0007669"/>
    <property type="project" value="UniProtKB-UniRule"/>
</dbReference>
<dbReference type="GO" id="GO:0009236">
    <property type="term" value="P:cobalamin biosynthetic process"/>
    <property type="evidence" value="ECO:0007669"/>
    <property type="project" value="UniProtKB-UniRule"/>
</dbReference>
<dbReference type="CDD" id="cd05388">
    <property type="entry name" value="CobB_N"/>
    <property type="match status" value="1"/>
</dbReference>
<dbReference type="CDD" id="cd03130">
    <property type="entry name" value="GATase1_CobB"/>
    <property type="match status" value="1"/>
</dbReference>
<dbReference type="Gene3D" id="3.40.50.880">
    <property type="match status" value="1"/>
</dbReference>
<dbReference type="Gene3D" id="3.40.50.300">
    <property type="entry name" value="P-loop containing nucleotide triphosphate hydrolases"/>
    <property type="match status" value="1"/>
</dbReference>
<dbReference type="HAMAP" id="MF_00027">
    <property type="entry name" value="CobB_CbiA"/>
    <property type="match status" value="1"/>
</dbReference>
<dbReference type="InterPro" id="IPR004484">
    <property type="entry name" value="CbiA/CobB_synth"/>
</dbReference>
<dbReference type="InterPro" id="IPR029062">
    <property type="entry name" value="Class_I_gatase-like"/>
</dbReference>
<dbReference type="InterPro" id="IPR002586">
    <property type="entry name" value="CobQ/CobB/MinD/ParA_Nub-bd_dom"/>
</dbReference>
<dbReference type="InterPro" id="IPR011698">
    <property type="entry name" value="GATase_3"/>
</dbReference>
<dbReference type="InterPro" id="IPR027417">
    <property type="entry name" value="P-loop_NTPase"/>
</dbReference>
<dbReference type="NCBIfam" id="TIGR00379">
    <property type="entry name" value="cobB"/>
    <property type="match status" value="1"/>
</dbReference>
<dbReference type="NCBIfam" id="NF002204">
    <property type="entry name" value="PRK01077.1"/>
    <property type="match status" value="1"/>
</dbReference>
<dbReference type="PANTHER" id="PTHR43873">
    <property type="entry name" value="COBYRINATE A,C-DIAMIDE SYNTHASE"/>
    <property type="match status" value="1"/>
</dbReference>
<dbReference type="PANTHER" id="PTHR43873:SF1">
    <property type="entry name" value="COBYRINATE A,C-DIAMIDE SYNTHASE"/>
    <property type="match status" value="1"/>
</dbReference>
<dbReference type="Pfam" id="PF01656">
    <property type="entry name" value="CbiA"/>
    <property type="match status" value="1"/>
</dbReference>
<dbReference type="Pfam" id="PF07685">
    <property type="entry name" value="GATase_3"/>
    <property type="match status" value="1"/>
</dbReference>
<dbReference type="SUPFAM" id="SSF52317">
    <property type="entry name" value="Class I glutamine amidotransferase-like"/>
    <property type="match status" value="1"/>
</dbReference>
<dbReference type="SUPFAM" id="SSF52540">
    <property type="entry name" value="P-loop containing nucleoside triphosphate hydrolases"/>
    <property type="match status" value="1"/>
</dbReference>
<dbReference type="PROSITE" id="PS51274">
    <property type="entry name" value="GATASE_COBBQ"/>
    <property type="match status" value="1"/>
</dbReference>
<proteinExistence type="inferred from homology"/>
<protein>
    <recommendedName>
        <fullName evidence="1">Cobyrinate a,c-diamide synthase</fullName>
        <ecNumber evidence="1">6.3.5.11</ecNumber>
    </recommendedName>
    <alternativeName>
        <fullName evidence="1">Cobyrinic acid a,c-diamide synthetase</fullName>
    </alternativeName>
</protein>
<name>CBIA_SYNY3</name>
<sequence>MTVIIAGERSGAGKTTITLAMLAYLARQKLRVQSFKVGPDYIDPMFHSQITGRPCRNLDPFLTSEAYVQRCFHYHSQGTPYSLIEGVMGLFDGVPYQGLTDYSSTAHIARLLNLPIVFVMDCQRLSGSVAAIVQGYRHWQPGVNLVGVILNRVGGDRHLELLKIALEPLRIPILGVFFRQQDLTLPDRHLGLVPCGELPQIQQYFDQLAHVAAQQLDWPKLLPLLETPRNLPSPMSLFDVPQKSPQARLAIAQDQAFNFYYADNLDLLTHCGFELIPFSPLEDTELPPAIDGVYLGGGFPELFAEQLSQNQALKDQLKTLIHQGLPTYGECGGLMYLSQSLTNFEGQIFPMLEMLPTAVTMGGKLSLGYRQAQVVNSHSWLWQTESLRGHEFHRSQMTKLPNQALYRQRGLLAIDQNTTDGWCVGSVQASYLHLHWGSQISTVEKFRAACLAFQKKLSYLGKHPPFKSVPLRNTGGDAHGRE</sequence>